<organism>
    <name type="scientific">Jatropha curcas</name>
    <name type="common">Barbados nut</name>
    <dbReference type="NCBI Taxonomy" id="180498"/>
    <lineage>
        <taxon>Eukaryota</taxon>
        <taxon>Viridiplantae</taxon>
        <taxon>Streptophyta</taxon>
        <taxon>Embryophyta</taxon>
        <taxon>Tracheophyta</taxon>
        <taxon>Spermatophyta</taxon>
        <taxon>Magnoliopsida</taxon>
        <taxon>eudicotyledons</taxon>
        <taxon>Gunneridae</taxon>
        <taxon>Pentapetalae</taxon>
        <taxon>rosids</taxon>
        <taxon>fabids</taxon>
        <taxon>Malpighiales</taxon>
        <taxon>Euphorbiaceae</taxon>
        <taxon>Crotonoideae</taxon>
        <taxon>Jatropheae</taxon>
        <taxon>Jatropha</taxon>
    </lineage>
</organism>
<protein>
    <recommendedName>
        <fullName>Non-specific lipid-transfer protein-like protein</fullName>
    </recommendedName>
    <alternativeName>
        <fullName>Xylogen-like protein</fullName>
    </alternativeName>
</protein>
<keyword id="KW-0903">Direct protein sequencing</keyword>
<comment type="similarity">
    <text evidence="2">Belongs to the plant LTP family.</text>
</comment>
<name>NLTL_JATCU</name>
<feature type="chain" id="PRO_0000426719" description="Non-specific lipid-transfer protein-like protein">
    <location>
        <begin position="1" status="less than"/>
        <end position="20" status="greater than"/>
    </location>
</feature>
<feature type="non-terminal residue" evidence="3">
    <location>
        <position position="1"/>
    </location>
</feature>
<feature type="non-terminal residue" evidence="3">
    <location>
        <position position="20"/>
    </location>
</feature>
<proteinExistence type="evidence at protein level"/>
<accession>C0HJG6</accession>
<evidence type="ECO:0000250" key="1">
    <source>
        <dbReference type="UniProtKB" id="Q8VYI9"/>
    </source>
</evidence>
<evidence type="ECO:0000255" key="2"/>
<evidence type="ECO:0000303" key="3">
    <source>
    </source>
</evidence>
<evidence type="ECO:0000305" key="4"/>
<sequence>TVLKTDAQCNCEAFKALSLP</sequence>
<reference evidence="4" key="1">
    <citation type="journal article" date="2013" name="Carbohydr. Polym.">
        <title>Arabinogalactan protein cluster from Jatropha curcas seed embryo contains fasciclin, xylogen and LysM proteins.</title>
        <authorList>
            <person name="Sehlbach M."/>
            <person name="Konig S."/>
            <person name="Mormann M."/>
            <person name="Sendker J."/>
            <person name="Hensel A."/>
        </authorList>
    </citation>
    <scope>PROTEIN SEQUENCE</scope>
    <scope>IDENTIFICATION BY MASS SPECTROMETRY</scope>
    <source>
        <tissue evidence="1">Seed</tissue>
    </source>
</reference>